<name>UBIML_HUMAN</name>
<reference key="1">
    <citation type="journal article" date="2006" name="Nature">
        <title>Human chromosome 11 DNA sequence and analysis including novel gene identification.</title>
        <authorList>
            <person name="Taylor T.D."/>
            <person name="Noguchi H."/>
            <person name="Totoki Y."/>
            <person name="Toyoda A."/>
            <person name="Kuroki Y."/>
            <person name="Dewar K."/>
            <person name="Lloyd C."/>
            <person name="Itoh T."/>
            <person name="Takeda T."/>
            <person name="Kim D.-W."/>
            <person name="She X."/>
            <person name="Barlow K.F."/>
            <person name="Bloom T."/>
            <person name="Bruford E."/>
            <person name="Chang J.L."/>
            <person name="Cuomo C.A."/>
            <person name="Eichler E."/>
            <person name="FitzGerald M.G."/>
            <person name="Jaffe D.B."/>
            <person name="LaButti K."/>
            <person name="Nicol R."/>
            <person name="Park H.-S."/>
            <person name="Seaman C."/>
            <person name="Sougnez C."/>
            <person name="Yang X."/>
            <person name="Zimmer A.R."/>
            <person name="Zody M.C."/>
            <person name="Birren B.W."/>
            <person name="Nusbaum C."/>
            <person name="Fujiyama A."/>
            <person name="Hattori M."/>
            <person name="Rogers J."/>
            <person name="Lander E.S."/>
            <person name="Sakaki Y."/>
        </authorList>
    </citation>
    <scope>NUCLEOTIDE SEQUENCE [LARGE SCALE GENOMIC DNA]</scope>
</reference>
<reference key="2">
    <citation type="journal article" date="2004" name="Genome Res.">
        <title>The status, quality, and expansion of the NIH full-length cDNA project: the Mammalian Gene Collection (MGC).</title>
        <authorList>
            <consortium name="The MGC Project Team"/>
        </authorList>
    </citation>
    <scope>NUCLEOTIDE SEQUENCE [LARGE SCALE MRNA] OF 32-102</scope>
</reference>
<dbReference type="EMBL" id="AP000769">
    <property type="status" value="NOT_ANNOTATED_CDS"/>
    <property type="molecule type" value="Genomic_DNA"/>
</dbReference>
<dbReference type="EMBL" id="BU588817">
    <property type="status" value="NOT_ANNOTATED_CDS"/>
    <property type="molecule type" value="mRNA"/>
</dbReference>
<dbReference type="EMBL" id="CB957149">
    <property type="status" value="NOT_ANNOTATED_CDS"/>
    <property type="molecule type" value="mRNA"/>
</dbReference>
<dbReference type="SMR" id="A6NDN8"/>
<dbReference type="BioMuta" id="-"/>
<dbReference type="neXtProt" id="NX_A6NDN8"/>
<dbReference type="InParanoid" id="A6NDN8"/>
<dbReference type="PAN-GO" id="A6NDN8">
    <property type="GO annotations" value="0 GO annotations based on evolutionary models"/>
</dbReference>
<dbReference type="PhylomeDB" id="A6NDN8"/>
<dbReference type="Pharos" id="A6NDN8">
    <property type="development level" value="Tdark"/>
</dbReference>
<dbReference type="PRO" id="PR:A6NDN8"/>
<dbReference type="Proteomes" id="UP000005640">
    <property type="component" value="Unplaced"/>
</dbReference>
<dbReference type="RNAct" id="A6NDN8">
    <property type="molecule type" value="protein"/>
</dbReference>
<dbReference type="Gene3D" id="3.10.20.90">
    <property type="entry name" value="Phosphatidylinositol 3-kinase Catalytic Subunit, Chain A, domain 1"/>
    <property type="match status" value="1"/>
</dbReference>
<dbReference type="InterPro" id="IPR000626">
    <property type="entry name" value="Ubiquitin-like_dom"/>
</dbReference>
<dbReference type="InterPro" id="IPR029071">
    <property type="entry name" value="Ubiquitin-like_domsf"/>
</dbReference>
<dbReference type="Pfam" id="PF00240">
    <property type="entry name" value="ubiquitin"/>
    <property type="match status" value="1"/>
</dbReference>
<dbReference type="SMART" id="SM00213">
    <property type="entry name" value="UBQ"/>
    <property type="match status" value="1"/>
</dbReference>
<dbReference type="SUPFAM" id="SSF54236">
    <property type="entry name" value="Ubiquitin-like"/>
    <property type="match status" value="1"/>
</dbReference>
<dbReference type="PROSITE" id="PS50053">
    <property type="entry name" value="UBIQUITIN_2"/>
    <property type="match status" value="1"/>
</dbReference>
<protein>
    <recommendedName>
        <fullName>Putative ubiquitin-like protein FUBI-like protein ENSP00000310146</fullName>
    </recommendedName>
</protein>
<keyword id="KW-1185">Reference proteome</keyword>
<feature type="chain" id="PRO_0000349384" description="Putative ubiquitin-like protein FUBI-like protein ENSP00000310146">
    <location>
        <begin position="1"/>
        <end position="102"/>
    </location>
</feature>
<feature type="domain" description="Ubiquitin-like" evidence="1">
    <location>
        <begin position="23"/>
        <end position="99"/>
    </location>
</feature>
<sequence length="102" mass="10909">MRGRRRAWRGAWRGGGAADLSLLCPQVAYVRARELHTLEVTGLETVAQSKAHVASLEGLIPEDKVVLLAGSPLQNEATLGQCGVEALTTLEVVGRRLGVHNV</sequence>
<proteinExistence type="predicted"/>
<accession>A6NDN8</accession>
<evidence type="ECO:0000255" key="1">
    <source>
        <dbReference type="PROSITE-ProRule" id="PRU00214"/>
    </source>
</evidence>
<organism>
    <name type="scientific">Homo sapiens</name>
    <name type="common">Human</name>
    <dbReference type="NCBI Taxonomy" id="9606"/>
    <lineage>
        <taxon>Eukaryota</taxon>
        <taxon>Metazoa</taxon>
        <taxon>Chordata</taxon>
        <taxon>Craniata</taxon>
        <taxon>Vertebrata</taxon>
        <taxon>Euteleostomi</taxon>
        <taxon>Mammalia</taxon>
        <taxon>Eutheria</taxon>
        <taxon>Euarchontoglires</taxon>
        <taxon>Primates</taxon>
        <taxon>Haplorrhini</taxon>
        <taxon>Catarrhini</taxon>
        <taxon>Hominidae</taxon>
        <taxon>Homo</taxon>
    </lineage>
</organism>